<accession>Q73X85</accession>
<organism>
    <name type="scientific">Mycolicibacterium paratuberculosis (strain ATCC BAA-968 / K-10)</name>
    <name type="common">Mycobacterium paratuberculosis</name>
    <dbReference type="NCBI Taxonomy" id="262316"/>
    <lineage>
        <taxon>Bacteria</taxon>
        <taxon>Bacillati</taxon>
        <taxon>Actinomycetota</taxon>
        <taxon>Actinomycetes</taxon>
        <taxon>Mycobacteriales</taxon>
        <taxon>Mycobacteriaceae</taxon>
        <taxon>Mycobacterium</taxon>
        <taxon>Mycobacterium avium complex (MAC)</taxon>
    </lineage>
</organism>
<dbReference type="EC" id="5.1.1.3" evidence="1"/>
<dbReference type="EMBL" id="AE016958">
    <property type="protein sequence ID" value="AAS04741.1"/>
    <property type="molecule type" value="Genomic_DNA"/>
</dbReference>
<dbReference type="RefSeq" id="WP_003873195.1">
    <property type="nucleotide sequence ID" value="NZ_CP106873.1"/>
</dbReference>
<dbReference type="SMR" id="Q73X85"/>
<dbReference type="STRING" id="262316.MAP_2424c"/>
<dbReference type="KEGG" id="mpa:MAP_2424c"/>
<dbReference type="PATRIC" id="fig|262316.17.peg.2575"/>
<dbReference type="eggNOG" id="COG0796">
    <property type="taxonomic scope" value="Bacteria"/>
</dbReference>
<dbReference type="HOGENOM" id="CLU_052344_0_1_11"/>
<dbReference type="UniPathway" id="UPA00219"/>
<dbReference type="Proteomes" id="UP000000580">
    <property type="component" value="Chromosome"/>
</dbReference>
<dbReference type="GO" id="GO:0008881">
    <property type="term" value="F:glutamate racemase activity"/>
    <property type="evidence" value="ECO:0007669"/>
    <property type="project" value="UniProtKB-UniRule"/>
</dbReference>
<dbReference type="GO" id="GO:0071555">
    <property type="term" value="P:cell wall organization"/>
    <property type="evidence" value="ECO:0007669"/>
    <property type="project" value="UniProtKB-KW"/>
</dbReference>
<dbReference type="GO" id="GO:0009252">
    <property type="term" value="P:peptidoglycan biosynthetic process"/>
    <property type="evidence" value="ECO:0007669"/>
    <property type="project" value="UniProtKB-UniRule"/>
</dbReference>
<dbReference type="GO" id="GO:0008360">
    <property type="term" value="P:regulation of cell shape"/>
    <property type="evidence" value="ECO:0007669"/>
    <property type="project" value="UniProtKB-KW"/>
</dbReference>
<dbReference type="FunFam" id="3.40.50.1860:FF:000001">
    <property type="entry name" value="Glutamate racemase"/>
    <property type="match status" value="1"/>
</dbReference>
<dbReference type="Gene3D" id="3.40.50.1860">
    <property type="match status" value="2"/>
</dbReference>
<dbReference type="HAMAP" id="MF_00258">
    <property type="entry name" value="Glu_racemase"/>
    <property type="match status" value="1"/>
</dbReference>
<dbReference type="InterPro" id="IPR015942">
    <property type="entry name" value="Asp/Glu/hydantoin_racemase"/>
</dbReference>
<dbReference type="InterPro" id="IPR001920">
    <property type="entry name" value="Asp/Glu_race"/>
</dbReference>
<dbReference type="InterPro" id="IPR018187">
    <property type="entry name" value="Asp/Glu_racemase_AS_1"/>
</dbReference>
<dbReference type="InterPro" id="IPR033134">
    <property type="entry name" value="Asp/Glu_racemase_AS_2"/>
</dbReference>
<dbReference type="InterPro" id="IPR004391">
    <property type="entry name" value="Glu_race"/>
</dbReference>
<dbReference type="NCBIfam" id="TIGR00067">
    <property type="entry name" value="glut_race"/>
    <property type="match status" value="1"/>
</dbReference>
<dbReference type="PANTHER" id="PTHR21198">
    <property type="entry name" value="GLUTAMATE RACEMASE"/>
    <property type="match status" value="1"/>
</dbReference>
<dbReference type="PANTHER" id="PTHR21198:SF2">
    <property type="entry name" value="GLUTAMATE RACEMASE"/>
    <property type="match status" value="1"/>
</dbReference>
<dbReference type="Pfam" id="PF01177">
    <property type="entry name" value="Asp_Glu_race"/>
    <property type="match status" value="1"/>
</dbReference>
<dbReference type="SUPFAM" id="SSF53681">
    <property type="entry name" value="Aspartate/glutamate racemase"/>
    <property type="match status" value="2"/>
</dbReference>
<dbReference type="PROSITE" id="PS00923">
    <property type="entry name" value="ASP_GLU_RACEMASE_1"/>
    <property type="match status" value="1"/>
</dbReference>
<dbReference type="PROSITE" id="PS00924">
    <property type="entry name" value="ASP_GLU_RACEMASE_2"/>
    <property type="match status" value="1"/>
</dbReference>
<gene>
    <name evidence="1" type="primary">murI</name>
    <name type="ordered locus">MAP_2424c</name>
</gene>
<feature type="chain" id="PRO_1000047585" description="Glutamate racemase">
    <location>
        <begin position="1"/>
        <end position="275"/>
    </location>
</feature>
<feature type="active site" description="Proton donor/acceptor" evidence="1">
    <location>
        <position position="75"/>
    </location>
</feature>
<feature type="active site" description="Proton donor/acceptor" evidence="1">
    <location>
        <position position="185"/>
    </location>
</feature>
<feature type="binding site" evidence="1">
    <location>
        <begin position="12"/>
        <end position="13"/>
    </location>
    <ligand>
        <name>substrate</name>
    </ligand>
</feature>
<feature type="binding site" evidence="1">
    <location>
        <begin position="44"/>
        <end position="45"/>
    </location>
    <ligand>
        <name>substrate</name>
    </ligand>
</feature>
<feature type="binding site" evidence="1">
    <location>
        <begin position="76"/>
        <end position="77"/>
    </location>
    <ligand>
        <name>substrate</name>
    </ligand>
</feature>
<feature type="binding site" evidence="1">
    <location>
        <begin position="186"/>
        <end position="187"/>
    </location>
    <ligand>
        <name>substrate</name>
    </ligand>
</feature>
<name>MURI_MYCPA</name>
<evidence type="ECO:0000255" key="1">
    <source>
        <dbReference type="HAMAP-Rule" id="MF_00258"/>
    </source>
</evidence>
<keyword id="KW-0133">Cell shape</keyword>
<keyword id="KW-0961">Cell wall biogenesis/degradation</keyword>
<keyword id="KW-0413">Isomerase</keyword>
<keyword id="KW-0573">Peptidoglycan synthesis</keyword>
<keyword id="KW-1185">Reference proteome</keyword>
<comment type="function">
    <text evidence="1">Provides the (R)-glutamate required for cell wall biosynthesis.</text>
</comment>
<comment type="catalytic activity">
    <reaction evidence="1">
        <text>L-glutamate = D-glutamate</text>
        <dbReference type="Rhea" id="RHEA:12813"/>
        <dbReference type="ChEBI" id="CHEBI:29985"/>
        <dbReference type="ChEBI" id="CHEBI:29986"/>
        <dbReference type="EC" id="5.1.1.3"/>
    </reaction>
</comment>
<comment type="pathway">
    <text evidence="1">Cell wall biogenesis; peptidoglycan biosynthesis.</text>
</comment>
<comment type="similarity">
    <text evidence="1">Belongs to the aspartate/glutamate racemases family.</text>
</comment>
<protein>
    <recommendedName>
        <fullName evidence="1">Glutamate racemase</fullName>
        <ecNumber evidence="1">5.1.1.3</ecNumber>
    </recommendedName>
</protein>
<sequence length="275" mass="29114">MSSALAPVGIFDSGVGGLTVARAIIDQLPDEHIIYVGDTGHGPYGPLSIPEVRAHALAIGDDLVGRGVKALVIACNTASAACLRDARERYEVPVVEVILPAVRRAVATTRNGRIGVIGTQATINSHAYQDAFAAARDTEITAVACPRFVDFVERGVTSGRQVLGLAEGYLEPLQRAQVDTLVLGCTHYPLLSGLIQLAMGDNVTLVSSAEETAKEVLRVLAERDLLHPHPDDPRAAGPSRVFEATGDPEAFTRLAARFLGPAVSGVRPVHHVRID</sequence>
<proteinExistence type="inferred from homology"/>
<reference key="1">
    <citation type="journal article" date="2005" name="Proc. Natl. Acad. Sci. U.S.A.">
        <title>The complete genome sequence of Mycobacterium avium subspecies paratuberculosis.</title>
        <authorList>
            <person name="Li L."/>
            <person name="Bannantine J.P."/>
            <person name="Zhang Q."/>
            <person name="Amonsin A."/>
            <person name="May B.J."/>
            <person name="Alt D."/>
            <person name="Banerji N."/>
            <person name="Kanjilal S."/>
            <person name="Kapur V."/>
        </authorList>
    </citation>
    <scope>NUCLEOTIDE SEQUENCE [LARGE SCALE GENOMIC DNA]</scope>
    <source>
        <strain>ATCC BAA-968 / K-10</strain>
    </source>
</reference>